<organism>
    <name type="scientific">Mus musculus</name>
    <name type="common">Mouse</name>
    <dbReference type="NCBI Taxonomy" id="10090"/>
    <lineage>
        <taxon>Eukaryota</taxon>
        <taxon>Metazoa</taxon>
        <taxon>Chordata</taxon>
        <taxon>Craniata</taxon>
        <taxon>Vertebrata</taxon>
        <taxon>Euteleostomi</taxon>
        <taxon>Mammalia</taxon>
        <taxon>Eutheria</taxon>
        <taxon>Euarchontoglires</taxon>
        <taxon>Glires</taxon>
        <taxon>Rodentia</taxon>
        <taxon>Myomorpha</taxon>
        <taxon>Muroidea</taxon>
        <taxon>Muridae</taxon>
        <taxon>Murinae</taxon>
        <taxon>Mus</taxon>
        <taxon>Mus</taxon>
    </lineage>
</organism>
<gene>
    <name type="primary">Tmx2</name>
    <name type="synonym">Txndc14</name>
</gene>
<feature type="signal peptide" evidence="2">
    <location>
        <begin position="1"/>
        <end position="48"/>
    </location>
</feature>
<feature type="chain" id="PRO_0000315754" description="Thioredoxin-related transmembrane protein 2">
    <location>
        <begin position="49"/>
        <end position="295"/>
    </location>
</feature>
<feature type="topological domain" description="Extracellular" evidence="2">
    <location>
        <begin position="49"/>
        <end position="102"/>
    </location>
</feature>
<feature type="transmembrane region" description="Helical" evidence="2">
    <location>
        <begin position="103"/>
        <end position="125"/>
    </location>
</feature>
<feature type="topological domain" description="Cytoplasmic" evidence="2">
    <location>
        <begin position="126"/>
        <end position="295"/>
    </location>
</feature>
<feature type="domain" description="Thioredoxin" evidence="3">
    <location>
        <begin position="114"/>
        <end position="269"/>
    </location>
</feature>
<feature type="region of interest" description="Disordered" evidence="4">
    <location>
        <begin position="266"/>
        <end position="295"/>
    </location>
</feature>
<feature type="short sequence motif" description="Di-lysine motif" evidence="5">
    <location>
        <begin position="292"/>
        <end position="295"/>
    </location>
</feature>
<feature type="compositionally biased region" description="Basic and acidic residues" evidence="4">
    <location>
        <begin position="269"/>
        <end position="279"/>
    </location>
</feature>
<feature type="modified residue" description="Phosphoserine" evidence="1">
    <location>
        <position position="211"/>
    </location>
</feature>
<feature type="modified residue" description="Phosphoserine" evidence="6">
    <location>
        <position position="243"/>
    </location>
</feature>
<feature type="sequence conflict" description="In Ref. 1; BAC35930." evidence="5" ref="1">
    <original>S</original>
    <variation>F</variation>
    <location>
        <position position="247"/>
    </location>
</feature>
<feature type="sequence conflict" description="In Ref. 1; BAC35930." evidence="5" ref="1">
    <original>D</original>
    <variation>V</variation>
    <location>
        <position position="294"/>
    </location>
</feature>
<sequence length="295" mass="33943">MAVLAPLIALVYSVPRLSRWLARPYCLLSALLSIAFLLVRKLPPICNGLPTQREDGNPCDFDWREVEILMFLSAIVMMKNRRSITVEQHVGNIFMFSKVANAILFFRLDIRMGLLYLTLCIVFLMTCKPPLYMGPEYIKYFNDKTIDEELERDKRVTWIVEFFANWSNDCQSFAPIYADLSLKYNCSGLNFGKVDVGRYTDVSTRYKVSTSPLTRQLPTLILFQGGKEVIRRPQIDKKGRAVSWTFSEENVIREFNLNELYQRAKKHSKGGDMSEEKPVDPAPTTVPDGENKKDK</sequence>
<keyword id="KW-1015">Disulfide bond</keyword>
<keyword id="KW-0256">Endoplasmic reticulum</keyword>
<keyword id="KW-0472">Membrane</keyword>
<keyword id="KW-0496">Mitochondrion</keyword>
<keyword id="KW-0597">Phosphoprotein</keyword>
<keyword id="KW-1185">Reference proteome</keyword>
<keyword id="KW-0732">Signal</keyword>
<keyword id="KW-0812">Transmembrane</keyword>
<keyword id="KW-1133">Transmembrane helix</keyword>
<reference key="1">
    <citation type="journal article" date="2005" name="Science">
        <title>The transcriptional landscape of the mammalian genome.</title>
        <authorList>
            <person name="Carninci P."/>
            <person name="Kasukawa T."/>
            <person name="Katayama S."/>
            <person name="Gough J."/>
            <person name="Frith M.C."/>
            <person name="Maeda N."/>
            <person name="Oyama R."/>
            <person name="Ravasi T."/>
            <person name="Lenhard B."/>
            <person name="Wells C."/>
            <person name="Kodzius R."/>
            <person name="Shimokawa K."/>
            <person name="Bajic V.B."/>
            <person name="Brenner S.E."/>
            <person name="Batalov S."/>
            <person name="Forrest A.R."/>
            <person name="Zavolan M."/>
            <person name="Davis M.J."/>
            <person name="Wilming L.G."/>
            <person name="Aidinis V."/>
            <person name="Allen J.E."/>
            <person name="Ambesi-Impiombato A."/>
            <person name="Apweiler R."/>
            <person name="Aturaliya R.N."/>
            <person name="Bailey T.L."/>
            <person name="Bansal M."/>
            <person name="Baxter L."/>
            <person name="Beisel K.W."/>
            <person name="Bersano T."/>
            <person name="Bono H."/>
            <person name="Chalk A.M."/>
            <person name="Chiu K.P."/>
            <person name="Choudhary V."/>
            <person name="Christoffels A."/>
            <person name="Clutterbuck D.R."/>
            <person name="Crowe M.L."/>
            <person name="Dalla E."/>
            <person name="Dalrymple B.P."/>
            <person name="de Bono B."/>
            <person name="Della Gatta G."/>
            <person name="di Bernardo D."/>
            <person name="Down T."/>
            <person name="Engstrom P."/>
            <person name="Fagiolini M."/>
            <person name="Faulkner G."/>
            <person name="Fletcher C.F."/>
            <person name="Fukushima T."/>
            <person name="Furuno M."/>
            <person name="Futaki S."/>
            <person name="Gariboldi M."/>
            <person name="Georgii-Hemming P."/>
            <person name="Gingeras T.R."/>
            <person name="Gojobori T."/>
            <person name="Green R.E."/>
            <person name="Gustincich S."/>
            <person name="Harbers M."/>
            <person name="Hayashi Y."/>
            <person name="Hensch T.K."/>
            <person name="Hirokawa N."/>
            <person name="Hill D."/>
            <person name="Huminiecki L."/>
            <person name="Iacono M."/>
            <person name="Ikeo K."/>
            <person name="Iwama A."/>
            <person name="Ishikawa T."/>
            <person name="Jakt M."/>
            <person name="Kanapin A."/>
            <person name="Katoh M."/>
            <person name="Kawasawa Y."/>
            <person name="Kelso J."/>
            <person name="Kitamura H."/>
            <person name="Kitano H."/>
            <person name="Kollias G."/>
            <person name="Krishnan S.P."/>
            <person name="Kruger A."/>
            <person name="Kummerfeld S.K."/>
            <person name="Kurochkin I.V."/>
            <person name="Lareau L.F."/>
            <person name="Lazarevic D."/>
            <person name="Lipovich L."/>
            <person name="Liu J."/>
            <person name="Liuni S."/>
            <person name="McWilliam S."/>
            <person name="Madan Babu M."/>
            <person name="Madera M."/>
            <person name="Marchionni L."/>
            <person name="Matsuda H."/>
            <person name="Matsuzawa S."/>
            <person name="Miki H."/>
            <person name="Mignone F."/>
            <person name="Miyake S."/>
            <person name="Morris K."/>
            <person name="Mottagui-Tabar S."/>
            <person name="Mulder N."/>
            <person name="Nakano N."/>
            <person name="Nakauchi H."/>
            <person name="Ng P."/>
            <person name="Nilsson R."/>
            <person name="Nishiguchi S."/>
            <person name="Nishikawa S."/>
            <person name="Nori F."/>
            <person name="Ohara O."/>
            <person name="Okazaki Y."/>
            <person name="Orlando V."/>
            <person name="Pang K.C."/>
            <person name="Pavan W.J."/>
            <person name="Pavesi G."/>
            <person name="Pesole G."/>
            <person name="Petrovsky N."/>
            <person name="Piazza S."/>
            <person name="Reed J."/>
            <person name="Reid J.F."/>
            <person name="Ring B.Z."/>
            <person name="Ringwald M."/>
            <person name="Rost B."/>
            <person name="Ruan Y."/>
            <person name="Salzberg S.L."/>
            <person name="Sandelin A."/>
            <person name="Schneider C."/>
            <person name="Schoenbach C."/>
            <person name="Sekiguchi K."/>
            <person name="Semple C.A."/>
            <person name="Seno S."/>
            <person name="Sessa L."/>
            <person name="Sheng Y."/>
            <person name="Shibata Y."/>
            <person name="Shimada H."/>
            <person name="Shimada K."/>
            <person name="Silva D."/>
            <person name="Sinclair B."/>
            <person name="Sperling S."/>
            <person name="Stupka E."/>
            <person name="Sugiura K."/>
            <person name="Sultana R."/>
            <person name="Takenaka Y."/>
            <person name="Taki K."/>
            <person name="Tammoja K."/>
            <person name="Tan S.L."/>
            <person name="Tang S."/>
            <person name="Taylor M.S."/>
            <person name="Tegner J."/>
            <person name="Teichmann S.A."/>
            <person name="Ueda H.R."/>
            <person name="van Nimwegen E."/>
            <person name="Verardo R."/>
            <person name="Wei C.L."/>
            <person name="Yagi K."/>
            <person name="Yamanishi H."/>
            <person name="Zabarovsky E."/>
            <person name="Zhu S."/>
            <person name="Zimmer A."/>
            <person name="Hide W."/>
            <person name="Bult C."/>
            <person name="Grimmond S.M."/>
            <person name="Teasdale R.D."/>
            <person name="Liu E.T."/>
            <person name="Brusic V."/>
            <person name="Quackenbush J."/>
            <person name="Wahlestedt C."/>
            <person name="Mattick J.S."/>
            <person name="Hume D.A."/>
            <person name="Kai C."/>
            <person name="Sasaki D."/>
            <person name="Tomaru Y."/>
            <person name="Fukuda S."/>
            <person name="Kanamori-Katayama M."/>
            <person name="Suzuki M."/>
            <person name="Aoki J."/>
            <person name="Arakawa T."/>
            <person name="Iida J."/>
            <person name="Imamura K."/>
            <person name="Itoh M."/>
            <person name="Kato T."/>
            <person name="Kawaji H."/>
            <person name="Kawagashira N."/>
            <person name="Kawashima T."/>
            <person name="Kojima M."/>
            <person name="Kondo S."/>
            <person name="Konno H."/>
            <person name="Nakano K."/>
            <person name="Ninomiya N."/>
            <person name="Nishio T."/>
            <person name="Okada M."/>
            <person name="Plessy C."/>
            <person name="Shibata K."/>
            <person name="Shiraki T."/>
            <person name="Suzuki S."/>
            <person name="Tagami M."/>
            <person name="Waki K."/>
            <person name="Watahiki A."/>
            <person name="Okamura-Oho Y."/>
            <person name="Suzuki H."/>
            <person name="Kawai J."/>
            <person name="Hayashizaki Y."/>
        </authorList>
    </citation>
    <scope>NUCLEOTIDE SEQUENCE [LARGE SCALE MRNA]</scope>
    <source>
        <strain>C57BL/6J</strain>
        <strain>NOD</strain>
        <tissue>Mammary gland</tissue>
        <tissue>Testis</tissue>
        <tissue>Tongue</tissue>
    </source>
</reference>
<reference key="2">
    <citation type="journal article" date="2004" name="Genome Res.">
        <title>The status, quality, and expansion of the NIH full-length cDNA project: the Mammalian Gene Collection (MGC).</title>
        <authorList>
            <consortium name="The MGC Project Team"/>
        </authorList>
    </citation>
    <scope>NUCLEOTIDE SEQUENCE [LARGE SCALE MRNA]</scope>
    <source>
        <strain>FVB/N</strain>
        <strain>NMRI</strain>
        <tissue>Kidney</tissue>
        <tissue>Mammary tumor</tissue>
    </source>
</reference>
<reference key="3">
    <citation type="journal article" date="2010" name="Cell">
        <title>A tissue-specific atlas of mouse protein phosphorylation and expression.</title>
        <authorList>
            <person name="Huttlin E.L."/>
            <person name="Jedrychowski M.P."/>
            <person name="Elias J.E."/>
            <person name="Goswami T."/>
            <person name="Rad R."/>
            <person name="Beausoleil S.A."/>
            <person name="Villen J."/>
            <person name="Haas W."/>
            <person name="Sowa M.E."/>
            <person name="Gygi S.P."/>
        </authorList>
    </citation>
    <scope>PHOSPHORYLATION [LARGE SCALE ANALYSIS] AT SER-243</scope>
    <scope>IDENTIFICATION BY MASS SPECTROMETRY [LARGE SCALE ANALYSIS]</scope>
    <source>
        <tissue>Brain</tissue>
        <tissue>Brown adipose tissue</tissue>
        <tissue>Heart</tissue>
        <tissue>Kidney</tissue>
        <tissue>Liver</tissue>
        <tissue>Lung</tissue>
        <tissue>Pancreas</tissue>
        <tissue>Spleen</tissue>
        <tissue>Testis</tissue>
    </source>
</reference>
<accession>Q9D710</accession>
<accession>Q8BW13</accession>
<dbReference type="EMBL" id="AK009759">
    <property type="protein sequence ID" value="BAB26483.1"/>
    <property type="molecule type" value="mRNA"/>
</dbReference>
<dbReference type="EMBL" id="AK075750">
    <property type="protein sequence ID" value="BAC35930.1"/>
    <property type="molecule type" value="mRNA"/>
</dbReference>
<dbReference type="EMBL" id="AK145245">
    <property type="protein sequence ID" value="BAE26323.1"/>
    <property type="molecule type" value="mRNA"/>
</dbReference>
<dbReference type="EMBL" id="AK170587">
    <property type="protein sequence ID" value="BAE41896.1"/>
    <property type="molecule type" value="mRNA"/>
</dbReference>
<dbReference type="EMBL" id="BC013544">
    <property type="protein sequence ID" value="AAH13544.1"/>
    <property type="molecule type" value="mRNA"/>
</dbReference>
<dbReference type="EMBL" id="BC110994">
    <property type="protein sequence ID" value="AAI10995.1"/>
    <property type="molecule type" value="mRNA"/>
</dbReference>
<dbReference type="CCDS" id="CCDS16188.1"/>
<dbReference type="RefSeq" id="NP_001277680.1">
    <property type="nucleotide sequence ID" value="NM_001290751.1"/>
</dbReference>
<dbReference type="RefSeq" id="NP_080144.1">
    <property type="nucleotide sequence ID" value="NM_025868.4"/>
</dbReference>
<dbReference type="SMR" id="Q9D710"/>
<dbReference type="BioGRID" id="211835">
    <property type="interactions" value="10"/>
</dbReference>
<dbReference type="FunCoup" id="Q9D710">
    <property type="interactions" value="2189"/>
</dbReference>
<dbReference type="STRING" id="10090.ENSMUSP00000107294"/>
<dbReference type="iPTMnet" id="Q9D710"/>
<dbReference type="PhosphoSitePlus" id="Q9D710"/>
<dbReference type="SwissPalm" id="Q9D710"/>
<dbReference type="jPOST" id="Q9D710"/>
<dbReference type="PaxDb" id="10090-ENSMUSP00000107294"/>
<dbReference type="ProteomicsDB" id="259270"/>
<dbReference type="Pumba" id="Q9D710"/>
<dbReference type="DNASU" id="66958"/>
<dbReference type="Ensembl" id="ENSMUST00000053664.9">
    <property type="protein sequence ID" value="ENSMUSP00000059582.9"/>
    <property type="gene ID" value="ENSMUSG00000050043.17"/>
</dbReference>
<dbReference type="Ensembl" id="ENSMUST00000111665.8">
    <property type="protein sequence ID" value="ENSMUSP00000107294.2"/>
    <property type="gene ID" value="ENSMUSG00000050043.17"/>
</dbReference>
<dbReference type="GeneID" id="66958"/>
<dbReference type="KEGG" id="mmu:66958"/>
<dbReference type="UCSC" id="uc008kix.2">
    <property type="organism name" value="mouse"/>
</dbReference>
<dbReference type="AGR" id="MGI:1914208"/>
<dbReference type="CTD" id="51075"/>
<dbReference type="MGI" id="MGI:1914208">
    <property type="gene designation" value="Tmx2"/>
</dbReference>
<dbReference type="VEuPathDB" id="HostDB:ENSMUSG00000050043"/>
<dbReference type="eggNOG" id="KOG0914">
    <property type="taxonomic scope" value="Eukaryota"/>
</dbReference>
<dbReference type="GeneTree" id="ENSGT00390000003751"/>
<dbReference type="HOGENOM" id="CLU_064868_0_0_1"/>
<dbReference type="InParanoid" id="Q9D710"/>
<dbReference type="OMA" id="VIMIRTR"/>
<dbReference type="OrthoDB" id="20229at2759"/>
<dbReference type="PhylomeDB" id="Q9D710"/>
<dbReference type="TreeFam" id="TF314606"/>
<dbReference type="BioGRID-ORCS" id="66958">
    <property type="hits" value="26 hits in 80 CRISPR screens"/>
</dbReference>
<dbReference type="CD-CODE" id="CE726F99">
    <property type="entry name" value="Postsynaptic density"/>
</dbReference>
<dbReference type="ChiTaRS" id="Tmx2">
    <property type="organism name" value="mouse"/>
</dbReference>
<dbReference type="PRO" id="PR:Q9D710"/>
<dbReference type="Proteomes" id="UP000000589">
    <property type="component" value="Chromosome 2"/>
</dbReference>
<dbReference type="RNAct" id="Q9D710">
    <property type="molecule type" value="protein"/>
</dbReference>
<dbReference type="Bgee" id="ENSMUSG00000050043">
    <property type="expression patterns" value="Expressed in cerebellum and 85 other cell types or tissues"/>
</dbReference>
<dbReference type="ExpressionAtlas" id="Q9D710">
    <property type="expression patterns" value="baseline and differential"/>
</dbReference>
<dbReference type="GO" id="GO:0005789">
    <property type="term" value="C:endoplasmic reticulum membrane"/>
    <property type="evidence" value="ECO:0007669"/>
    <property type="project" value="UniProtKB-SubCell"/>
</dbReference>
<dbReference type="GO" id="GO:0044233">
    <property type="term" value="C:mitochondria-associated endoplasmic reticulum membrane contact site"/>
    <property type="evidence" value="ECO:0000250"/>
    <property type="project" value="UniProtKB"/>
</dbReference>
<dbReference type="GO" id="GO:0031966">
    <property type="term" value="C:mitochondrial membrane"/>
    <property type="evidence" value="ECO:0007669"/>
    <property type="project" value="UniProtKB-SubCell"/>
</dbReference>
<dbReference type="GO" id="GO:0015036">
    <property type="term" value="F:disulfide oxidoreductase activity"/>
    <property type="evidence" value="ECO:0000250"/>
    <property type="project" value="UniProtKB"/>
</dbReference>
<dbReference type="GO" id="GO:0042802">
    <property type="term" value="F:identical protein binding"/>
    <property type="evidence" value="ECO:0007669"/>
    <property type="project" value="Ensembl"/>
</dbReference>
<dbReference type="GO" id="GO:0007420">
    <property type="term" value="P:brain development"/>
    <property type="evidence" value="ECO:0000250"/>
    <property type="project" value="UniProtKB"/>
</dbReference>
<dbReference type="CDD" id="cd02962">
    <property type="entry name" value="TMX2"/>
    <property type="match status" value="1"/>
</dbReference>
<dbReference type="Gene3D" id="3.40.30.10">
    <property type="entry name" value="Glutaredoxin"/>
    <property type="match status" value="1"/>
</dbReference>
<dbReference type="InterPro" id="IPR036249">
    <property type="entry name" value="Thioredoxin-like_sf"/>
</dbReference>
<dbReference type="InterPro" id="IPR013766">
    <property type="entry name" value="Thioredoxin_domain"/>
</dbReference>
<dbReference type="InterPro" id="IPR039101">
    <property type="entry name" value="TMX2"/>
</dbReference>
<dbReference type="InterPro" id="IPR037463">
    <property type="entry name" value="TMX2_thioredoxin_dom"/>
</dbReference>
<dbReference type="PANTHER" id="PTHR15853">
    <property type="entry name" value="THIOREDOXIN-RELATED"/>
    <property type="match status" value="1"/>
</dbReference>
<dbReference type="PANTHER" id="PTHR15853:SF0">
    <property type="entry name" value="THIOREDOXIN-RELATED TRANSMEMBRANE PROTEIN 2"/>
    <property type="match status" value="1"/>
</dbReference>
<dbReference type="Pfam" id="PF00085">
    <property type="entry name" value="Thioredoxin"/>
    <property type="match status" value="1"/>
</dbReference>
<dbReference type="SUPFAM" id="SSF52833">
    <property type="entry name" value="Thioredoxin-like"/>
    <property type="match status" value="1"/>
</dbReference>
<dbReference type="PROSITE" id="PS51352">
    <property type="entry name" value="THIOREDOXIN_2"/>
    <property type="match status" value="1"/>
</dbReference>
<evidence type="ECO:0000250" key="1">
    <source>
        <dbReference type="UniProtKB" id="Q9Y320"/>
    </source>
</evidence>
<evidence type="ECO:0000255" key="2"/>
<evidence type="ECO:0000255" key="3">
    <source>
        <dbReference type="PROSITE-ProRule" id="PRU00691"/>
    </source>
</evidence>
<evidence type="ECO:0000256" key="4">
    <source>
        <dbReference type="SAM" id="MobiDB-lite"/>
    </source>
</evidence>
<evidence type="ECO:0000305" key="5"/>
<evidence type="ECO:0007744" key="6">
    <source>
    </source>
</evidence>
<name>TMX2_MOUSE</name>
<protein>
    <recommendedName>
        <fullName>Thioredoxin-related transmembrane protein 2</fullName>
    </recommendedName>
    <alternativeName>
        <fullName>Thioredoxin domain-containing protein 14</fullName>
    </alternativeName>
</protein>
<comment type="function">
    <text evidence="1">Endoplasmic reticulum and mitochondria-associated protein that probably functions as a regulator of cellular redox state and thereby regulates protein post-translational modification, protein folding and mitochondrial activity. Indirectly regulates neuronal proliferation, migration, and organization in the developing brain.</text>
</comment>
<comment type="subunit">
    <text evidence="1">Monomer (By similarity). Homodimer; disulfide-linked (By similarity). Occurs in both reduced and oxidized monomeric form (By similarity). Oxidative conditions increase homodimerization (By similarity). Interacts with CANX (By similarity). Interacts with ATP2A2 (By similarity).</text>
</comment>
<comment type="subcellular location">
    <subcellularLocation>
        <location evidence="1">Endoplasmic reticulum membrane</location>
        <topology evidence="2">Single-pass type I membrane protein</topology>
    </subcellularLocation>
    <subcellularLocation>
        <location evidence="1">Mitochondrion membrane</location>
        <topology evidence="2">Single-pass type I membrane protein</topology>
    </subcellularLocation>
    <text evidence="1">Localizes to endoplasmic reticulum mitochondria-associated membrane (MAMs) that connect the endoplasmic reticulum and the mitochondria.</text>
</comment>
<comment type="domain">
    <text evidence="5">The thioredoxin domain lacks the 2 redox-active cysteines, suggesting that it lacks thioredoxin activity.</text>
</comment>
<comment type="domain">
    <text evidence="5">The di-lysine motif confers endoplasmic reticulum localization for type I membrane proteins.</text>
</comment>
<proteinExistence type="evidence at protein level"/>